<protein>
    <recommendedName>
        <fullName>Magnesium-chelatase subunit ChlI</fullName>
        <ecNumber>6.6.1.1</ecNumber>
    </recommendedName>
    <alternativeName>
        <fullName>Mg-protoporphyrin IX chelatase</fullName>
    </alternativeName>
</protein>
<gene>
    <name type="primary">chlI</name>
</gene>
<sequence>MNLSIKENKETVRPVFPFTAIVGQEEMKLALMLNVIDPKIGGVMIMGDRGTGKSTTIRAIADLLPKIEIVKDDLFNSHPSDVDLMSDENKHALQNGINIDKAYIKVPMVDLPLGATEDRVCGTIDIEKALTEGVKTFEPGLLAKANRGILYVDEVNLLDDHLVDILLDSAASGWNTVEREGISVRHPARFVLVGSGNPEEGELRPQLLDRFGMHAEIRTVKDPELRVQIVEQRTNFDQDPKKCIENCAKDQIKLKQQIADAQLLLSTITIDYDLRVKISQVCGELDVDGLRGDIVTNRAAKAYAAFNGQQTVNSSDISKVITLCLRHRLRKDPLESMDSGEKVEKVFNKVFNLEEI</sequence>
<keyword id="KW-0067">ATP-binding</keyword>
<keyword id="KW-0149">Chlorophyll biosynthesis</keyword>
<keyword id="KW-0150">Chloroplast</keyword>
<keyword id="KW-0436">Ligase</keyword>
<keyword id="KW-0547">Nucleotide-binding</keyword>
<keyword id="KW-0602">Photosynthesis</keyword>
<keyword id="KW-0934">Plastid</keyword>
<geneLocation type="chloroplast"/>
<name>CHLI_PORPU</name>
<reference key="1">
    <citation type="journal article" date="1995" name="Plant Mol. Biol. Rep.">
        <title>Complete nucleotide sequence of the Porphyra purpurea chloroplast genome.</title>
        <authorList>
            <person name="Reith M.E."/>
            <person name="Munholland J."/>
        </authorList>
    </citation>
    <scope>NUCLEOTIDE SEQUENCE [LARGE SCALE GENOMIC DNA]</scope>
    <source>
        <strain>Avonport</strain>
    </source>
</reference>
<proteinExistence type="inferred from homology"/>
<dbReference type="EC" id="6.6.1.1"/>
<dbReference type="EMBL" id="U38804">
    <property type="protein sequence ID" value="AAC08280.1"/>
    <property type="molecule type" value="Genomic_DNA"/>
</dbReference>
<dbReference type="PIR" id="S73315">
    <property type="entry name" value="S73315"/>
</dbReference>
<dbReference type="RefSeq" id="NP_054004.1">
    <property type="nucleotide sequence ID" value="NC_000925.1"/>
</dbReference>
<dbReference type="SMR" id="P51394"/>
<dbReference type="GeneID" id="810034"/>
<dbReference type="UniPathway" id="UPA00668"/>
<dbReference type="GO" id="GO:0009507">
    <property type="term" value="C:chloroplast"/>
    <property type="evidence" value="ECO:0007669"/>
    <property type="project" value="UniProtKB-SubCell"/>
</dbReference>
<dbReference type="GO" id="GO:0005524">
    <property type="term" value="F:ATP binding"/>
    <property type="evidence" value="ECO:0007669"/>
    <property type="project" value="UniProtKB-KW"/>
</dbReference>
<dbReference type="GO" id="GO:0016887">
    <property type="term" value="F:ATP hydrolysis activity"/>
    <property type="evidence" value="ECO:0007669"/>
    <property type="project" value="InterPro"/>
</dbReference>
<dbReference type="GO" id="GO:0016851">
    <property type="term" value="F:magnesium chelatase activity"/>
    <property type="evidence" value="ECO:0007669"/>
    <property type="project" value="UniProtKB-EC"/>
</dbReference>
<dbReference type="GO" id="GO:0015995">
    <property type="term" value="P:chlorophyll biosynthetic process"/>
    <property type="evidence" value="ECO:0007669"/>
    <property type="project" value="UniProtKB-UniPathway"/>
</dbReference>
<dbReference type="GO" id="GO:0015979">
    <property type="term" value="P:photosynthesis"/>
    <property type="evidence" value="ECO:0007669"/>
    <property type="project" value="UniProtKB-KW"/>
</dbReference>
<dbReference type="CDD" id="cd00009">
    <property type="entry name" value="AAA"/>
    <property type="match status" value="1"/>
</dbReference>
<dbReference type="FunFam" id="3.40.50.300:FF:000601">
    <property type="entry name" value="Mg-protoporphyrin IX chelatase"/>
    <property type="match status" value="1"/>
</dbReference>
<dbReference type="Gene3D" id="1.10.8.80">
    <property type="entry name" value="Magnesium chelatase subunit I, C-Terminal domain"/>
    <property type="match status" value="1"/>
</dbReference>
<dbReference type="Gene3D" id="3.40.50.300">
    <property type="entry name" value="P-loop containing nucleotide triphosphate hydrolases"/>
    <property type="match status" value="1"/>
</dbReference>
<dbReference type="InterPro" id="IPR003593">
    <property type="entry name" value="AAA+_ATPase"/>
</dbReference>
<dbReference type="InterPro" id="IPR045006">
    <property type="entry name" value="CHLI-like"/>
</dbReference>
<dbReference type="InterPro" id="IPR041628">
    <property type="entry name" value="ChlI/MoxR_AAA_lid"/>
</dbReference>
<dbReference type="InterPro" id="IPR011775">
    <property type="entry name" value="Mg_chelatase_ATPase-isu"/>
</dbReference>
<dbReference type="InterPro" id="IPR000523">
    <property type="entry name" value="Mg_chelatse_chII-like_cat_dom"/>
</dbReference>
<dbReference type="InterPro" id="IPR027417">
    <property type="entry name" value="P-loop_NTPase"/>
</dbReference>
<dbReference type="NCBIfam" id="TIGR02030">
    <property type="entry name" value="BchI-ChlI"/>
    <property type="match status" value="1"/>
</dbReference>
<dbReference type="PANTHER" id="PTHR32039">
    <property type="entry name" value="MAGNESIUM-CHELATASE SUBUNIT CHLI"/>
    <property type="match status" value="1"/>
</dbReference>
<dbReference type="PANTHER" id="PTHR32039:SF9">
    <property type="entry name" value="MAGNESIUM-CHELATASE SUBUNIT CHLI-2, CHLOROPLASTIC"/>
    <property type="match status" value="1"/>
</dbReference>
<dbReference type="Pfam" id="PF17863">
    <property type="entry name" value="AAA_lid_2"/>
    <property type="match status" value="1"/>
</dbReference>
<dbReference type="Pfam" id="PF01078">
    <property type="entry name" value="Mg_chelatase"/>
    <property type="match status" value="1"/>
</dbReference>
<dbReference type="SMART" id="SM00382">
    <property type="entry name" value="AAA"/>
    <property type="match status" value="1"/>
</dbReference>
<dbReference type="SUPFAM" id="SSF52540">
    <property type="entry name" value="P-loop containing nucleoside triphosphate hydrolases"/>
    <property type="match status" value="1"/>
</dbReference>
<evidence type="ECO:0000255" key="1"/>
<evidence type="ECO:0000305" key="2"/>
<organism>
    <name type="scientific">Porphyra purpurea</name>
    <name type="common">Red seaweed</name>
    <name type="synonym">Ulva purpurea</name>
    <dbReference type="NCBI Taxonomy" id="2787"/>
    <lineage>
        <taxon>Eukaryota</taxon>
        <taxon>Rhodophyta</taxon>
        <taxon>Bangiophyceae</taxon>
        <taxon>Bangiales</taxon>
        <taxon>Bangiaceae</taxon>
        <taxon>Porphyra</taxon>
    </lineage>
</organism>
<comment type="function">
    <text>Involved in chlorophyll biosynthesis; introduces a magnesium ion into protoporphyrin IX to yield Mg-protoporphyrin IX.</text>
</comment>
<comment type="catalytic activity">
    <reaction>
        <text>protoporphyrin IX + Mg(2+) + ATP + H2O = Mg-protoporphyrin IX + ADP + phosphate + 3 H(+)</text>
        <dbReference type="Rhea" id="RHEA:13961"/>
        <dbReference type="ChEBI" id="CHEBI:15377"/>
        <dbReference type="ChEBI" id="CHEBI:15378"/>
        <dbReference type="ChEBI" id="CHEBI:18420"/>
        <dbReference type="ChEBI" id="CHEBI:30616"/>
        <dbReference type="ChEBI" id="CHEBI:43474"/>
        <dbReference type="ChEBI" id="CHEBI:57306"/>
        <dbReference type="ChEBI" id="CHEBI:60492"/>
        <dbReference type="ChEBI" id="CHEBI:456216"/>
        <dbReference type="EC" id="6.6.1.1"/>
    </reaction>
</comment>
<comment type="pathway">
    <text>Porphyrin-containing compound metabolism; chlorophyll biosynthesis.</text>
</comment>
<comment type="subcellular location">
    <subcellularLocation>
        <location>Plastid</location>
        <location>Chloroplast</location>
    </subcellularLocation>
</comment>
<comment type="similarity">
    <text evidence="2">Belongs to the Mg-chelatase subunits D/I family.</text>
</comment>
<feature type="chain" id="PRO_0000206873" description="Magnesium-chelatase subunit ChlI">
    <location>
        <begin position="1"/>
        <end position="356"/>
    </location>
</feature>
<feature type="binding site" evidence="1">
    <location>
        <begin position="47"/>
        <end position="54"/>
    </location>
    <ligand>
        <name>ATP</name>
        <dbReference type="ChEBI" id="CHEBI:30616"/>
    </ligand>
</feature>
<accession>P51394</accession>